<organism>
    <name type="scientific">Rattus norvegicus</name>
    <name type="common">Rat</name>
    <dbReference type="NCBI Taxonomy" id="10116"/>
    <lineage>
        <taxon>Eukaryota</taxon>
        <taxon>Metazoa</taxon>
        <taxon>Chordata</taxon>
        <taxon>Craniata</taxon>
        <taxon>Vertebrata</taxon>
        <taxon>Euteleostomi</taxon>
        <taxon>Mammalia</taxon>
        <taxon>Eutheria</taxon>
        <taxon>Euarchontoglires</taxon>
        <taxon>Glires</taxon>
        <taxon>Rodentia</taxon>
        <taxon>Myomorpha</taxon>
        <taxon>Muroidea</taxon>
        <taxon>Muridae</taxon>
        <taxon>Murinae</taxon>
        <taxon>Rattus</taxon>
    </lineage>
</organism>
<protein>
    <recommendedName>
        <fullName evidence="4">SKA complex subunit 3</fullName>
    </recommendedName>
    <alternativeName>
        <fullName>Spindle and kinetochore-associated protein 3</fullName>
    </alternativeName>
</protein>
<reference evidence="5" key="1">
    <citation type="submission" date="2016-07" db="EMBL/GenBank/DDBJ databases">
        <authorList>
            <person name="Mural R.J."/>
            <person name="Adams M.D."/>
            <person name="Myers E.W."/>
            <person name="Smith H.O."/>
            <person name="Venter J.C."/>
        </authorList>
    </citation>
    <scope>NUCLEOTIDE SEQUENCE [LARGE SCALE GENOMIC DNA]</scope>
</reference>
<reference key="2">
    <citation type="journal article" date="2004" name="Genome Res.">
        <title>The status, quality, and expansion of the NIH full-length cDNA project: the Mammalian Gene Collection (MGC).</title>
        <authorList>
            <consortium name="The MGC Project Team"/>
        </authorList>
    </citation>
    <scope>NUCLEOTIDE SEQUENCE [LARGE SCALE MRNA]</scope>
    <source>
        <tissue>Lung</tissue>
    </source>
</reference>
<keyword id="KW-0131">Cell cycle</keyword>
<keyword id="KW-0132">Cell division</keyword>
<keyword id="KW-0137">Centromere</keyword>
<keyword id="KW-0158">Chromosome</keyword>
<keyword id="KW-0963">Cytoplasm</keyword>
<keyword id="KW-0206">Cytoskeleton</keyword>
<keyword id="KW-0995">Kinetochore</keyword>
<keyword id="KW-0493">Microtubule</keyword>
<keyword id="KW-0498">Mitosis</keyword>
<keyword id="KW-0597">Phosphoprotein</keyword>
<keyword id="KW-1185">Reference proteome</keyword>
<comment type="function">
    <text evidence="1 2">Component of the SKA complex, a microtubule plus end-binding complex of the outer kinetochore that stabilizes spindle microtubule-kinetochore attachments, promotes alignment of chromosomes at the mitotic spindle equator (chromosome congression) and assists suppression of the spindle assembly checkpoint. Kinetochores, consisting of a centromere-associated inner segment and a microtubule-contacting outer segment, play a crucial role in chromosome segregation by mediating the physical connection between centromeric DNA and spindle microtubules. The outer kinetochore is made up of the ten-subunit KMN network complex, comprising the MIS12, NDC80 and KNL1 complexes, and auxiliary microtubule-associated components such as the SKA complex; together they connect the outer kinetochore with the inner kinetochore, bind microtubules, and mediate interactions with mitotic checkpoint proteins that delay anaphase until chromosomes are bioriented on the spindle. The SKA complex is loaded onto bioriented kinetochores and it facilitates chromosome congression by stabilizing microtubules together with MAPRE1, and end-on attachment of the NDC80 complex to depolymerizing spindle microtubules, thereby assisting the poleward-moving kinetochore in withstanding microtubule pulling forces. The complex associates with dynamic microtubule plus-ends and can track both depolymerizing and elongating microtubules. The complex recruits protein phosphatase 1 (PP1) to the kinetochore in prometaphase and metaphase, to oppose spindle assembly checkpoint signaling and promote the onset of anaphase. Within the complex, binds microtubules but with a much lower affinity than SKA1. Promotes stability of the polo-like kinase PLK1 protein (By similarity). During meiosis the SKA complex stabilizes the meiotic spindle and is required for its migration to the cortex (By similarity).</text>
</comment>
<comment type="subunit">
    <text evidence="2">Component of the SKA complex, composed of SKA1, SKA2 and SKA3. The SKA complex is a homodimer organized around a central W-shaped coiled-coil structure, formed by the interacting domains of SKA1, SKA2, and SKA3, each end of the 'W' is extended further by the C-terminal microtubule-binding domains of SKA1 and SKA3; the complex forms extended structures on microtubules. Interacts with the NDC80-NUF2 heterodimer of the NDC80 complex (via coiled coils); the interaction localizes the SKA complex to the kinetochore and is required to establish kinetochore-microtubule end-on attachments. Interacts with polo-like kinase PLK1.</text>
</comment>
<comment type="subcellular location">
    <subcellularLocation>
        <location evidence="2">Cytoplasm</location>
        <location evidence="2">Cytoskeleton</location>
        <location evidence="2">Spindle</location>
    </subcellularLocation>
    <subcellularLocation>
        <location evidence="2">Chromosome</location>
        <location evidence="2">Centromere</location>
        <location evidence="2">Kinetochore</location>
    </subcellularLocation>
    <subcellularLocation>
        <location evidence="2">Cytoplasm</location>
        <location evidence="2">Cytoskeleton</location>
        <location evidence="2">Microtubule organizing center</location>
        <location evidence="2">Centrosome</location>
    </subcellularLocation>
    <text evidence="2">Localizes to bioriented kinetochores and spindle microtubules during prometaphase and metaphase in a NDC80 complex-dependent manner. The SKA complex begins to concentrate at kinetochores before microtubule attachment but reaches maximum levels on bioriented metaphase chromosomes. The localization of the SKA complex to kinetochores is positively regulated by protein serine/threonine kinase CDK1. The localization of the SKA complex to kinetochores is negatively regulated by protein serine/threonine kinase AURKB, and this action is opposed directly or indirectly by the PP1 and PP2A protein phosphatase complexes. Localizes at the centrosome during interphase and prophase.</text>
</comment>
<comment type="similarity">
    <text evidence="4">Belongs to the SKA3 family.</text>
</comment>
<name>SKA3_RAT</name>
<proteinExistence type="evidence at transcript level"/>
<gene>
    <name type="primary">Ska3</name>
    <name type="synonym">Rama1</name>
</gene>
<feature type="chain" id="PRO_0000350565" description="SKA complex subunit 3">
    <location>
        <begin position="1"/>
        <end position="418"/>
    </location>
</feature>
<feature type="region of interest" description="Binds the NDC80 complex" evidence="2">
    <location>
        <begin position="102"/>
        <end position="417"/>
    </location>
</feature>
<feature type="region of interest" description="Disordered" evidence="3">
    <location>
        <begin position="111"/>
        <end position="157"/>
    </location>
</feature>
<feature type="region of interest" description="Disordered" evidence="3">
    <location>
        <begin position="170"/>
        <end position="198"/>
    </location>
</feature>
<feature type="region of interest" description="Binds microtubules and contacts the microtubule-binding domain of SKA1" evidence="2">
    <location>
        <begin position="196"/>
        <end position="417"/>
    </location>
</feature>
<feature type="region of interest" description="Required for localization to kinetochores" evidence="2">
    <location>
        <begin position="350"/>
        <end position="417"/>
    </location>
</feature>
<feature type="modified residue" description="Phosphoserine" evidence="2">
    <location>
        <position position="34"/>
    </location>
</feature>
<feature type="modified residue" description="Phosphoserine" evidence="2">
    <location>
        <position position="119"/>
    </location>
</feature>
<feature type="modified residue" description="Phosphoserine" evidence="2">
    <location>
        <position position="120"/>
    </location>
</feature>
<feature type="modified residue" description="Phosphoserine" evidence="2">
    <location>
        <position position="139"/>
    </location>
</feature>
<feature type="modified residue" description="Phosphoserine" evidence="2">
    <location>
        <position position="155"/>
    </location>
</feature>
<feature type="modified residue" description="Phosphoserine" evidence="2">
    <location>
        <position position="159"/>
    </location>
</feature>
<feature type="modified residue" description="Phosphothreonine" evidence="2">
    <location>
        <position position="190"/>
    </location>
</feature>
<feature type="modified residue" description="Phosphothreonine" evidence="2">
    <location>
        <position position="217"/>
    </location>
</feature>
<feature type="modified residue" description="Phosphoserine" evidence="2">
    <location>
        <position position="290"/>
    </location>
</feature>
<feature type="modified residue" description="Phosphothreonine" evidence="2">
    <location>
        <position position="298"/>
    </location>
</feature>
<feature type="modified residue" description="Phosphoserine" evidence="2">
    <location>
        <position position="325"/>
    </location>
</feature>
<feature type="modified residue" description="Phosphoserine" evidence="2">
    <location>
        <position position="353"/>
    </location>
</feature>
<feature type="modified residue" description="Phosphothreonine" evidence="2">
    <location>
        <position position="364"/>
    </location>
</feature>
<feature type="sequence conflict" description="In Ref. 2; AAI66461." evidence="4" ref="2">
    <original>S</original>
    <variation>SE</variation>
    <location>
        <position position="34"/>
    </location>
</feature>
<dbReference type="EMBL" id="BC166461">
    <property type="protein sequence ID" value="AAI66461.1"/>
    <property type="molecule type" value="mRNA"/>
</dbReference>
<dbReference type="EMBL" id="CH474049">
    <property type="protein sequence ID" value="EDM14361.1"/>
    <property type="molecule type" value="Genomic_DNA"/>
</dbReference>
<dbReference type="RefSeq" id="NP_001101849.1">
    <property type="nucleotide sequence ID" value="NM_001108379.3"/>
</dbReference>
<dbReference type="RefSeq" id="NP_001418619.1">
    <property type="nucleotide sequence ID" value="NM_001431690.1"/>
</dbReference>
<dbReference type="RefSeq" id="XP_006252136.1">
    <property type="nucleotide sequence ID" value="XM_006252074.1"/>
</dbReference>
<dbReference type="RefSeq" id="XP_006252137.1">
    <property type="nucleotide sequence ID" value="XM_006252075.1"/>
</dbReference>
<dbReference type="SMR" id="B2GUZ2"/>
<dbReference type="FunCoup" id="B2GUZ2">
    <property type="interactions" value="1038"/>
</dbReference>
<dbReference type="STRING" id="10116.ENSRNOP00000033626"/>
<dbReference type="PhosphoSitePlus" id="B2GUZ2"/>
<dbReference type="PaxDb" id="10116-ENSRNOP00000033626"/>
<dbReference type="Ensembl" id="ENSRNOT00000032723.5">
    <property type="protein sequence ID" value="ENSRNOP00000033626.5"/>
    <property type="gene ID" value="ENSRNOG00000021847.5"/>
</dbReference>
<dbReference type="GeneID" id="361047"/>
<dbReference type="KEGG" id="rno:361047"/>
<dbReference type="UCSC" id="RGD:1307201">
    <property type="organism name" value="rat"/>
</dbReference>
<dbReference type="AGR" id="RGD:1307201"/>
<dbReference type="CTD" id="221150"/>
<dbReference type="RGD" id="1307201">
    <property type="gene designation" value="Ska3"/>
</dbReference>
<dbReference type="VEuPathDB" id="HostDB:ENSRNOG00000021847"/>
<dbReference type="eggNOG" id="ENOG502QSTX">
    <property type="taxonomic scope" value="Eukaryota"/>
</dbReference>
<dbReference type="GeneTree" id="ENSGT00500000045005"/>
<dbReference type="HOGENOM" id="CLU_033334_1_0_1"/>
<dbReference type="InParanoid" id="B2GUZ2"/>
<dbReference type="OMA" id="LMKKNSM"/>
<dbReference type="OrthoDB" id="5987638at2759"/>
<dbReference type="PhylomeDB" id="B2GUZ2"/>
<dbReference type="TreeFam" id="TF332721"/>
<dbReference type="PRO" id="PR:B2GUZ2"/>
<dbReference type="Proteomes" id="UP000002494">
    <property type="component" value="Chromosome 15"/>
</dbReference>
<dbReference type="Proteomes" id="UP000234681">
    <property type="component" value="Chromosome 15"/>
</dbReference>
<dbReference type="Bgee" id="ENSRNOG00000021847">
    <property type="expression patterns" value="Expressed in thymus and 18 other cell types or tissues"/>
</dbReference>
<dbReference type="GO" id="GO:0005813">
    <property type="term" value="C:centrosome"/>
    <property type="evidence" value="ECO:0000250"/>
    <property type="project" value="UniProtKB"/>
</dbReference>
<dbReference type="GO" id="GO:0005737">
    <property type="term" value="C:cytoplasm"/>
    <property type="evidence" value="ECO:0007669"/>
    <property type="project" value="UniProtKB-KW"/>
</dbReference>
<dbReference type="GO" id="GO:0000776">
    <property type="term" value="C:kinetochore"/>
    <property type="evidence" value="ECO:0000250"/>
    <property type="project" value="UniProtKB"/>
</dbReference>
<dbReference type="GO" id="GO:0072687">
    <property type="term" value="C:meiotic spindle"/>
    <property type="evidence" value="ECO:0000266"/>
    <property type="project" value="RGD"/>
</dbReference>
<dbReference type="GO" id="GO:0072686">
    <property type="term" value="C:mitotic spindle"/>
    <property type="evidence" value="ECO:0000250"/>
    <property type="project" value="UniProtKB"/>
</dbReference>
<dbReference type="GO" id="GO:0000940">
    <property type="term" value="C:outer kinetochore"/>
    <property type="evidence" value="ECO:0000250"/>
    <property type="project" value="UniProtKB"/>
</dbReference>
<dbReference type="GO" id="GO:0170027">
    <property type="term" value="C:SKA complex"/>
    <property type="evidence" value="ECO:0000266"/>
    <property type="project" value="RGD"/>
</dbReference>
<dbReference type="GO" id="GO:0005876">
    <property type="term" value="C:spindle microtubule"/>
    <property type="evidence" value="ECO:0000250"/>
    <property type="project" value="UniProtKB"/>
</dbReference>
<dbReference type="GO" id="GO:0008017">
    <property type="term" value="F:microtubule binding"/>
    <property type="evidence" value="ECO:0000250"/>
    <property type="project" value="UniProtKB"/>
</dbReference>
<dbReference type="GO" id="GO:0051315">
    <property type="term" value="P:attachment of mitotic spindle microtubules to kinetochore"/>
    <property type="evidence" value="ECO:0000250"/>
    <property type="project" value="UniProtKB"/>
</dbReference>
<dbReference type="GO" id="GO:0051301">
    <property type="term" value="P:cell division"/>
    <property type="evidence" value="ECO:0007669"/>
    <property type="project" value="UniProtKB-KW"/>
</dbReference>
<dbReference type="GO" id="GO:0007059">
    <property type="term" value="P:chromosome segregation"/>
    <property type="evidence" value="ECO:0000318"/>
    <property type="project" value="GO_Central"/>
</dbReference>
<dbReference type="GO" id="GO:0051296">
    <property type="term" value="P:establishment of meiotic spindle orientation"/>
    <property type="evidence" value="ECO:0000250"/>
    <property type="project" value="UniProtKB"/>
</dbReference>
<dbReference type="GO" id="GO:0051310">
    <property type="term" value="P:metaphase chromosome alignment"/>
    <property type="evidence" value="ECO:0000266"/>
    <property type="project" value="RGD"/>
</dbReference>
<dbReference type="GO" id="GO:0000278">
    <property type="term" value="P:mitotic cell cycle"/>
    <property type="evidence" value="ECO:0000318"/>
    <property type="project" value="GO_Central"/>
</dbReference>
<dbReference type="GO" id="GO:0007080">
    <property type="term" value="P:mitotic metaphase chromosome alignment"/>
    <property type="evidence" value="ECO:0000250"/>
    <property type="project" value="UniProtKB"/>
</dbReference>
<dbReference type="GO" id="GO:0000070">
    <property type="term" value="P:mitotic sister chromatid segregation"/>
    <property type="evidence" value="ECO:0000250"/>
    <property type="project" value="UniProtKB"/>
</dbReference>
<dbReference type="GO" id="GO:0140499">
    <property type="term" value="P:negative regulation of mitotic spindle assembly checkpoint signaling"/>
    <property type="evidence" value="ECO:0000250"/>
    <property type="project" value="UniProtKB"/>
</dbReference>
<dbReference type="GO" id="GO:0031110">
    <property type="term" value="P:regulation of microtubule polymerization or depolymerization"/>
    <property type="evidence" value="ECO:0000250"/>
    <property type="project" value="UniProtKB"/>
</dbReference>
<dbReference type="GO" id="GO:0007056">
    <property type="term" value="P:spindle assembly involved in female meiosis"/>
    <property type="evidence" value="ECO:0000250"/>
    <property type="project" value="UniProtKB"/>
</dbReference>
<dbReference type="Gene3D" id="6.10.250.1400">
    <property type="match status" value="1"/>
</dbReference>
<dbReference type="InterPro" id="IPR033341">
    <property type="entry name" value="SKA3"/>
</dbReference>
<dbReference type="PANTHER" id="PTHR48118">
    <property type="entry name" value="SPINDLE AND KINETOCHORE-ASSOCIATED PROTEIN 3"/>
    <property type="match status" value="1"/>
</dbReference>
<dbReference type="PANTHER" id="PTHR48118:SF1">
    <property type="entry name" value="SPINDLE AND KINETOCHORE-ASSOCIATED PROTEIN 3"/>
    <property type="match status" value="1"/>
</dbReference>
<accession>B2GUZ2</accession>
<accession>A6KHD2</accession>
<evidence type="ECO:0000250" key="1">
    <source>
        <dbReference type="UniProtKB" id="Q8C263"/>
    </source>
</evidence>
<evidence type="ECO:0000250" key="2">
    <source>
        <dbReference type="UniProtKB" id="Q8IX90"/>
    </source>
</evidence>
<evidence type="ECO:0000256" key="3">
    <source>
        <dbReference type="SAM" id="MobiDB-lite"/>
    </source>
</evidence>
<evidence type="ECO:0000305" key="4"/>
<evidence type="ECO:0000312" key="5">
    <source>
        <dbReference type="EMBL" id="EDM14361.1"/>
    </source>
</evidence>
<sequence length="418" mass="46223">MNPIQSFHCKLRSLATVLDGETARLLRALDGEDSDFEDSSARILCDLYSEVQTLKDDVNAHLDKARLESRESTHFIKAAKVLMKKNSADIIKLREFFQKYGYQARDKEDSACEHRVSNSSPGLAVCKDTQEPGVKQELSEPRVPRGSAPEEPLRSPQLSDFGLQRYMVSQGPANPRQETVSLKEDRASETTPAKDPSVQVLKTPRCALKMDDFECVTPKLEHFGISEYTMCLNEDYTMGLKNMKSIKSSPLSGVGGEAVETGPVTSDNSFAIPGPMIQQLEKNDVEYINSPLPPKFCTPGLKIPSSMDSTDLVSIDYPLSKPNSSPTDLEDKDCAPLILNSDECYQSFADPHSPTITSYENFTTPSPPKVTAIPEDILQMLKYNSNLASPIDVKAMPLRRGFTSKGQSTRGAANKENW</sequence>